<protein>
    <recommendedName>
        <fullName evidence="1">Tol-Pal system protein TolB</fullName>
    </recommendedName>
</protein>
<proteinExistence type="inferred from homology"/>
<comment type="function">
    <text evidence="1">Part of the Tol-Pal system, which plays a role in outer membrane invagination during cell division and is important for maintaining outer membrane integrity. TolB occupies a key intermediary position in the Tol-Pal system because it communicates directly with both membrane-embedded components, Pal in the outer membrane and TolA in the inner membrane.</text>
</comment>
<comment type="subunit">
    <text evidence="1">The Tol-Pal system is composed of five core proteins: the inner membrane proteins TolA, TolQ and TolR, the periplasmic protein TolB and the outer membrane protein Pal. They form a network linking the inner and outer membranes and the peptidoglycan layer.</text>
</comment>
<comment type="subcellular location">
    <subcellularLocation>
        <location evidence="1">Periplasm</location>
    </subcellularLocation>
</comment>
<comment type="similarity">
    <text evidence="1">Belongs to the TolB family.</text>
</comment>
<sequence length="430" mass="45972">MKQALRVAFGFLILWASVLHAEVRIVIDSGVDSGRPIGVVPFQWAGPGAAPEDIGGIVAADLRNSGKFNPLDRARLPQQPGSAQEVQPSAWSALGIDAVVVGQVTPNPDGSYNVAYQLVDTGGAPGTVLAQNSYKVNKQWLRYAGHTASDEVFEKLTGIKGAFRTRIAYVVQTNGGQFPYELRVSDYDGYNQFVVHRSPQPLMSPAWSPDGSKLAYVTFESGRSALVIQTLANGAVRQVASFPRHNGAPAFSPDGSKLAFALSKTGSLNLYVMDLASGQIRQVTDGRSNNTEPTWFPDSQNLAFTSDQAGRPQVYKVNINGGAPQRITWEGSQNQDADVSSDGKFMVMVSSNGGQQHIAKQDLATGGVQVLSSTFLDETPSLAPNGTMVIYSSSQGMGSVLNLVSTDGRFKARLPATDGQVKFPAWSPYL</sequence>
<gene>
    <name evidence="1" type="primary">tolB</name>
    <name type="ordered locus">SbBS512_E0662</name>
</gene>
<organism>
    <name type="scientific">Shigella boydii serotype 18 (strain CDC 3083-94 / BS512)</name>
    <dbReference type="NCBI Taxonomy" id="344609"/>
    <lineage>
        <taxon>Bacteria</taxon>
        <taxon>Pseudomonadati</taxon>
        <taxon>Pseudomonadota</taxon>
        <taxon>Gammaproteobacteria</taxon>
        <taxon>Enterobacterales</taxon>
        <taxon>Enterobacteriaceae</taxon>
        <taxon>Shigella</taxon>
    </lineage>
</organism>
<name>TOLB_SHIB3</name>
<reference key="1">
    <citation type="submission" date="2008-05" db="EMBL/GenBank/DDBJ databases">
        <title>Complete sequence of Shigella boydii serotype 18 strain BS512.</title>
        <authorList>
            <person name="Rasko D.A."/>
            <person name="Rosovitz M."/>
            <person name="Maurelli A.T."/>
            <person name="Myers G."/>
            <person name="Seshadri R."/>
            <person name="Cer R."/>
            <person name="Jiang L."/>
            <person name="Ravel J."/>
            <person name="Sebastian Y."/>
        </authorList>
    </citation>
    <scope>NUCLEOTIDE SEQUENCE [LARGE SCALE GENOMIC DNA]</scope>
    <source>
        <strain>CDC 3083-94 / BS512</strain>
    </source>
</reference>
<feature type="signal peptide" evidence="1">
    <location>
        <begin position="1"/>
        <end position="21"/>
    </location>
</feature>
<feature type="chain" id="PRO_1000131537" description="Tol-Pal system protein TolB" evidence="1">
    <location>
        <begin position="22"/>
        <end position="430"/>
    </location>
</feature>
<keyword id="KW-0131">Cell cycle</keyword>
<keyword id="KW-0132">Cell division</keyword>
<keyword id="KW-0574">Periplasm</keyword>
<keyword id="KW-1185">Reference proteome</keyword>
<keyword id="KW-0732">Signal</keyword>
<dbReference type="EMBL" id="CP001063">
    <property type="protein sequence ID" value="ACD09355.1"/>
    <property type="molecule type" value="Genomic_DNA"/>
</dbReference>
<dbReference type="RefSeq" id="WP_012421565.1">
    <property type="nucleotide sequence ID" value="NC_010658.1"/>
</dbReference>
<dbReference type="SMR" id="B2TUC6"/>
<dbReference type="STRING" id="344609.SbBS512_E0662"/>
<dbReference type="KEGG" id="sbc:SbBS512_E0662"/>
<dbReference type="HOGENOM" id="CLU_047123_0_0_6"/>
<dbReference type="Proteomes" id="UP000001030">
    <property type="component" value="Chromosome"/>
</dbReference>
<dbReference type="GO" id="GO:0042597">
    <property type="term" value="C:periplasmic space"/>
    <property type="evidence" value="ECO:0007669"/>
    <property type="project" value="UniProtKB-SubCell"/>
</dbReference>
<dbReference type="GO" id="GO:0051301">
    <property type="term" value="P:cell division"/>
    <property type="evidence" value="ECO:0007669"/>
    <property type="project" value="UniProtKB-UniRule"/>
</dbReference>
<dbReference type="GO" id="GO:0017038">
    <property type="term" value="P:protein import"/>
    <property type="evidence" value="ECO:0007669"/>
    <property type="project" value="InterPro"/>
</dbReference>
<dbReference type="FunFam" id="2.120.10.30:FF:000022">
    <property type="entry name" value="Tol-Pal system protein TolB"/>
    <property type="match status" value="1"/>
</dbReference>
<dbReference type="FunFam" id="3.40.50.10070:FF:000001">
    <property type="entry name" value="Tol-Pal system protein TolB"/>
    <property type="match status" value="1"/>
</dbReference>
<dbReference type="Gene3D" id="2.120.10.30">
    <property type="entry name" value="TolB, C-terminal domain"/>
    <property type="match status" value="1"/>
</dbReference>
<dbReference type="Gene3D" id="3.40.50.10070">
    <property type="entry name" value="TolB, N-terminal domain"/>
    <property type="match status" value="1"/>
</dbReference>
<dbReference type="HAMAP" id="MF_00671">
    <property type="entry name" value="TolB"/>
    <property type="match status" value="1"/>
</dbReference>
<dbReference type="InterPro" id="IPR011042">
    <property type="entry name" value="6-blade_b-propeller_TolB-like"/>
</dbReference>
<dbReference type="InterPro" id="IPR011659">
    <property type="entry name" value="PD40"/>
</dbReference>
<dbReference type="InterPro" id="IPR014167">
    <property type="entry name" value="Tol-Pal_TolB"/>
</dbReference>
<dbReference type="InterPro" id="IPR007195">
    <property type="entry name" value="TolB_N"/>
</dbReference>
<dbReference type="NCBIfam" id="TIGR02800">
    <property type="entry name" value="propeller_TolB"/>
    <property type="match status" value="1"/>
</dbReference>
<dbReference type="PANTHER" id="PTHR36842:SF1">
    <property type="entry name" value="PROTEIN TOLB"/>
    <property type="match status" value="1"/>
</dbReference>
<dbReference type="PANTHER" id="PTHR36842">
    <property type="entry name" value="PROTEIN TOLB HOMOLOG"/>
    <property type="match status" value="1"/>
</dbReference>
<dbReference type="Pfam" id="PF07676">
    <property type="entry name" value="PD40"/>
    <property type="match status" value="4"/>
</dbReference>
<dbReference type="Pfam" id="PF04052">
    <property type="entry name" value="TolB_N"/>
    <property type="match status" value="1"/>
</dbReference>
<dbReference type="SUPFAM" id="SSF52964">
    <property type="entry name" value="TolB, N-terminal domain"/>
    <property type="match status" value="1"/>
</dbReference>
<dbReference type="SUPFAM" id="SSF69304">
    <property type="entry name" value="Tricorn protease N-terminal domain"/>
    <property type="match status" value="1"/>
</dbReference>
<accession>B2TUC6</accession>
<evidence type="ECO:0000255" key="1">
    <source>
        <dbReference type="HAMAP-Rule" id="MF_00671"/>
    </source>
</evidence>